<proteinExistence type="inferred from homology"/>
<organism>
    <name type="scientific">Yersinia pestis bv. Antiqua (strain Angola)</name>
    <dbReference type="NCBI Taxonomy" id="349746"/>
    <lineage>
        <taxon>Bacteria</taxon>
        <taxon>Pseudomonadati</taxon>
        <taxon>Pseudomonadota</taxon>
        <taxon>Gammaproteobacteria</taxon>
        <taxon>Enterobacterales</taxon>
        <taxon>Yersiniaceae</taxon>
        <taxon>Yersinia</taxon>
    </lineage>
</organism>
<accession>A9R563</accession>
<protein>
    <recommendedName>
        <fullName evidence="1">Cation/acetate symporter ActP</fullName>
    </recommendedName>
    <alternativeName>
        <fullName evidence="1">Acetate permease</fullName>
    </alternativeName>
    <alternativeName>
        <fullName evidence="1">Acetate transporter ActP</fullName>
    </alternativeName>
</protein>
<sequence>MKIRHWSALSLFVLPALAQAEALTGEVHRQPLNIQAIVMFLLFVGGTLYITYWASKRTRSRQDYYTAGGRITGFQNGLAIAGDYMSAASFLGISALVYASGYDGLIYSIGFLIGWPIILFLIAERLRNLGRYTFADVASYRLQQRPIRTLSACGSLVVVALYLIAQMVGAGKLIQLLFGLNYHVAVVLVGILMVLYVLFGGMLATTWVQIIKAVMLLSGATFMAIMVMKSVNFNFNTLFSEAVKVHPKGLSIMSPGGLVSDPISALSLGLALMFGTAGLPHILMRFFTVSDAKEARKSVFYATGFIGYFYILTFIIGFGAILLVGPNQTFKDAAGALLGGNNMAAVHLANAVGGSFFLGFISAVAFATILAVVAGLTLAGASAVSHDLYASVIKKGKANERDELRVSKITVIILGIVAIGLGILFENQNIAFMVGLAFSIAASCNFPIIIISMYWDKLTTRGAMIGGWLGLSTAVILMILGPTIWVTILGHEKPIYPYEYPALFSMIAAFVGTWFFSITDNSETGKQERLLFKSQFVRSQTGLGASKGGAH</sequence>
<keyword id="KW-0997">Cell inner membrane</keyword>
<keyword id="KW-1003">Cell membrane</keyword>
<keyword id="KW-0406">Ion transport</keyword>
<keyword id="KW-0472">Membrane</keyword>
<keyword id="KW-0915">Sodium</keyword>
<keyword id="KW-0739">Sodium transport</keyword>
<keyword id="KW-0769">Symport</keyword>
<keyword id="KW-0812">Transmembrane</keyword>
<keyword id="KW-1133">Transmembrane helix</keyword>
<keyword id="KW-0813">Transport</keyword>
<reference key="1">
    <citation type="journal article" date="2010" name="J. Bacteriol.">
        <title>Genome sequence of the deep-rooted Yersinia pestis strain Angola reveals new insights into the evolution and pangenome of the plague bacterium.</title>
        <authorList>
            <person name="Eppinger M."/>
            <person name="Worsham P.L."/>
            <person name="Nikolich M.P."/>
            <person name="Riley D.R."/>
            <person name="Sebastian Y."/>
            <person name="Mou S."/>
            <person name="Achtman M."/>
            <person name="Lindler L.E."/>
            <person name="Ravel J."/>
        </authorList>
    </citation>
    <scope>NUCLEOTIDE SEQUENCE [LARGE SCALE GENOMIC DNA]</scope>
    <source>
        <strain>Angola</strain>
    </source>
</reference>
<name>ACTP_YERPG</name>
<comment type="function">
    <text evidence="1">Transports acetate.</text>
</comment>
<comment type="subcellular location">
    <subcellularLocation>
        <location evidence="1">Cell inner membrane</location>
        <topology evidence="1">Multi-pass membrane protein</topology>
    </subcellularLocation>
</comment>
<comment type="similarity">
    <text evidence="1">Belongs to the sodium:solute symporter (SSF) (TC 2.A.21) family.</text>
</comment>
<evidence type="ECO:0000255" key="1">
    <source>
        <dbReference type="HAMAP-Rule" id="MF_01426"/>
    </source>
</evidence>
<dbReference type="EMBL" id="CP000901">
    <property type="protein sequence ID" value="ABX85327.1"/>
    <property type="molecule type" value="Genomic_DNA"/>
</dbReference>
<dbReference type="RefSeq" id="WP_002209029.1">
    <property type="nucleotide sequence ID" value="NZ_CP009935.1"/>
</dbReference>
<dbReference type="SMR" id="A9R563"/>
<dbReference type="GeneID" id="57974352"/>
<dbReference type="KEGG" id="ypg:YpAngola_A3949"/>
<dbReference type="PATRIC" id="fig|349746.12.peg.673"/>
<dbReference type="GO" id="GO:0005886">
    <property type="term" value="C:plasma membrane"/>
    <property type="evidence" value="ECO:0007669"/>
    <property type="project" value="UniProtKB-SubCell"/>
</dbReference>
<dbReference type="GO" id="GO:0015123">
    <property type="term" value="F:acetate transmembrane transporter activity"/>
    <property type="evidence" value="ECO:0007669"/>
    <property type="project" value="UniProtKB-UniRule"/>
</dbReference>
<dbReference type="GO" id="GO:0043879">
    <property type="term" value="F:glycolate transmembrane transporter activity"/>
    <property type="evidence" value="ECO:0007669"/>
    <property type="project" value="InterPro"/>
</dbReference>
<dbReference type="GO" id="GO:0015293">
    <property type="term" value="F:symporter activity"/>
    <property type="evidence" value="ECO:0007669"/>
    <property type="project" value="UniProtKB-KW"/>
</dbReference>
<dbReference type="GO" id="GO:0006847">
    <property type="term" value="P:plasma membrane acetate transport"/>
    <property type="evidence" value="ECO:0007669"/>
    <property type="project" value="TreeGrafter"/>
</dbReference>
<dbReference type="GO" id="GO:0006814">
    <property type="term" value="P:sodium ion transport"/>
    <property type="evidence" value="ECO:0007669"/>
    <property type="project" value="UniProtKB-KW"/>
</dbReference>
<dbReference type="CDD" id="cd11480">
    <property type="entry name" value="SLC5sbd_u4"/>
    <property type="match status" value="1"/>
</dbReference>
<dbReference type="FunFam" id="1.20.1730.10:FF:000001">
    <property type="entry name" value="Cation/acetate symporter ActP"/>
    <property type="match status" value="1"/>
</dbReference>
<dbReference type="Gene3D" id="1.20.1730.10">
    <property type="entry name" value="Sodium/glucose cotransporter"/>
    <property type="match status" value="1"/>
</dbReference>
<dbReference type="HAMAP" id="MF_01426">
    <property type="entry name" value="Acet_symport_ActP"/>
    <property type="match status" value="1"/>
</dbReference>
<dbReference type="InterPro" id="IPR014083">
    <property type="entry name" value="Cation/Ac_symporter_ActP"/>
</dbReference>
<dbReference type="InterPro" id="IPR038377">
    <property type="entry name" value="Na/Glc_symporter_sf"/>
</dbReference>
<dbReference type="InterPro" id="IPR001734">
    <property type="entry name" value="Na/solute_symporter"/>
</dbReference>
<dbReference type="InterPro" id="IPR018212">
    <property type="entry name" value="Na/solute_symporter_CS"/>
</dbReference>
<dbReference type="InterPro" id="IPR050277">
    <property type="entry name" value="Sodium:Solute_Symporter"/>
</dbReference>
<dbReference type="NCBIfam" id="NF006903">
    <property type="entry name" value="PRK09395.1"/>
    <property type="match status" value="1"/>
</dbReference>
<dbReference type="NCBIfam" id="NF009135">
    <property type="entry name" value="PRK12488.1"/>
    <property type="match status" value="1"/>
</dbReference>
<dbReference type="NCBIfam" id="TIGR00813">
    <property type="entry name" value="sss"/>
    <property type="match status" value="1"/>
</dbReference>
<dbReference type="NCBIfam" id="TIGR02711">
    <property type="entry name" value="symport_actP"/>
    <property type="match status" value="1"/>
</dbReference>
<dbReference type="PANTHER" id="PTHR48086:SF6">
    <property type="entry name" value="CATION_ACETATE SYMPORTER ACTP"/>
    <property type="match status" value="1"/>
</dbReference>
<dbReference type="PANTHER" id="PTHR48086">
    <property type="entry name" value="SODIUM/PROLINE SYMPORTER-RELATED"/>
    <property type="match status" value="1"/>
</dbReference>
<dbReference type="Pfam" id="PF00474">
    <property type="entry name" value="SSF"/>
    <property type="match status" value="1"/>
</dbReference>
<dbReference type="PROSITE" id="PS00456">
    <property type="entry name" value="NA_SOLUT_SYMP_1"/>
    <property type="match status" value="1"/>
</dbReference>
<dbReference type="PROSITE" id="PS50283">
    <property type="entry name" value="NA_SOLUT_SYMP_3"/>
    <property type="match status" value="1"/>
</dbReference>
<feature type="chain" id="PRO_1000145732" description="Cation/acetate symporter ActP">
    <location>
        <begin position="1"/>
        <end position="551"/>
    </location>
</feature>
<feature type="transmembrane region" description="Helical" evidence="1">
    <location>
        <begin position="5"/>
        <end position="25"/>
    </location>
</feature>
<feature type="transmembrane region" description="Helical" evidence="1">
    <location>
        <begin position="34"/>
        <end position="54"/>
    </location>
</feature>
<feature type="transmembrane region" description="Helical" evidence="1">
    <location>
        <begin position="77"/>
        <end position="97"/>
    </location>
</feature>
<feature type="transmembrane region" description="Helical" evidence="1">
    <location>
        <begin position="104"/>
        <end position="124"/>
    </location>
</feature>
<feature type="transmembrane region" description="Helical" evidence="1">
    <location>
        <begin position="150"/>
        <end position="170"/>
    </location>
</feature>
<feature type="transmembrane region" description="Helical" evidence="1">
    <location>
        <begin position="184"/>
        <end position="204"/>
    </location>
</feature>
<feature type="transmembrane region" description="Helical" evidence="1">
    <location>
        <begin position="207"/>
        <end position="227"/>
    </location>
</feature>
<feature type="transmembrane region" description="Helical" evidence="1">
    <location>
        <begin position="263"/>
        <end position="283"/>
    </location>
</feature>
<feature type="transmembrane region" description="Helical" evidence="1">
    <location>
        <begin position="304"/>
        <end position="324"/>
    </location>
</feature>
<feature type="transmembrane region" description="Helical" evidence="1">
    <location>
        <begin position="356"/>
        <end position="376"/>
    </location>
</feature>
<feature type="transmembrane region" description="Helical" evidence="1">
    <location>
        <begin position="406"/>
        <end position="426"/>
    </location>
</feature>
<feature type="transmembrane region" description="Helical" evidence="1">
    <location>
        <begin position="430"/>
        <end position="450"/>
    </location>
</feature>
<feature type="transmembrane region" description="Helical" evidence="1">
    <location>
        <begin position="469"/>
        <end position="489"/>
    </location>
</feature>
<feature type="transmembrane region" description="Helical" evidence="1">
    <location>
        <begin position="498"/>
        <end position="518"/>
    </location>
</feature>
<gene>
    <name evidence="1" type="primary">actP</name>
    <name type="ordered locus">YpAngola_A3949</name>
</gene>